<keyword id="KW-0963">Cytoplasm</keyword>
<keyword id="KW-0413">Isomerase</keyword>
<keyword id="KW-0627">Porphyrin biosynthesis</keyword>
<keyword id="KW-0663">Pyridoxal phosphate</keyword>
<keyword id="KW-1185">Reference proteome</keyword>
<comment type="catalytic activity">
    <reaction evidence="1">
        <text>(S)-4-amino-5-oxopentanoate = 5-aminolevulinate</text>
        <dbReference type="Rhea" id="RHEA:14265"/>
        <dbReference type="ChEBI" id="CHEBI:57501"/>
        <dbReference type="ChEBI" id="CHEBI:356416"/>
        <dbReference type="EC" id="5.4.3.8"/>
    </reaction>
</comment>
<comment type="cofactor">
    <cofactor evidence="1">
        <name>pyridoxal 5'-phosphate</name>
        <dbReference type="ChEBI" id="CHEBI:597326"/>
    </cofactor>
</comment>
<comment type="pathway">
    <text evidence="1">Porphyrin-containing compound metabolism; protoporphyrin-IX biosynthesis; 5-aminolevulinate from L-glutamyl-tRNA(Glu): step 2/2.</text>
</comment>
<comment type="subunit">
    <text evidence="1">Homodimer.</text>
</comment>
<comment type="subcellular location">
    <subcellularLocation>
        <location evidence="1">Cytoplasm</location>
    </subcellularLocation>
</comment>
<comment type="similarity">
    <text evidence="1">Belongs to the class-III pyridoxal-phosphate-dependent aminotransferase family. HemL subfamily.</text>
</comment>
<name>GSA_PROMH</name>
<gene>
    <name evidence="1" type="primary">hemL</name>
    <name type="ordered locus">PMI0205</name>
</gene>
<feature type="chain" id="PRO_1000121909" description="Glutamate-1-semialdehyde 2,1-aminomutase">
    <location>
        <begin position="1"/>
        <end position="428"/>
    </location>
</feature>
<feature type="modified residue" description="N6-(pyridoxal phosphate)lysine" evidence="1">
    <location>
        <position position="265"/>
    </location>
</feature>
<sequence length="428" mass="45838">MSKSETLYNLAQQVIPGGVNSPVRAFNGVGGTPLFIERANGAYIYDADGRAYLDYVGSWGPMVLGHNHPAIRHAVTDAVQKGLSFGAPTAAEVEMANLVTELVPSMDMVRMVNSGTEATMSAIRLARGYTGRDKIIKFEGCYHGHADCLLVKAGSGALTMGQPNSPGVPADFVKHTLTCTYNDLNSVRQAFENYPEEIACIIVEPVAGNMNCVPPKADFLPGLRALCDEFGALLIIDEVMTGFRVALGGAQAYYDVDPDLTCLGKIIGGGMPVGAFGGHKEVMSQLAPIGPVYQAGTLSGNPIAMAAGLACLQEVSQPGVHQTLDELTTMLADGLLEKAQQAGIPMVVNHVGGMFGLFFTDAKEVTCYQDVMNCDVERFKQFFHLMLEKRIYLAPSAFEAGFMSIAHSKEDIQRTIDAAEYAFSKMKA</sequence>
<evidence type="ECO:0000255" key="1">
    <source>
        <dbReference type="HAMAP-Rule" id="MF_00375"/>
    </source>
</evidence>
<protein>
    <recommendedName>
        <fullName evidence="1">Glutamate-1-semialdehyde 2,1-aminomutase</fullName>
        <shortName evidence="1">GSA</shortName>
        <ecNumber evidence="1">5.4.3.8</ecNumber>
    </recommendedName>
    <alternativeName>
        <fullName evidence="1">Glutamate-1-semialdehyde aminotransferase</fullName>
        <shortName evidence="1">GSA-AT</shortName>
    </alternativeName>
</protein>
<proteinExistence type="inferred from homology"/>
<dbReference type="EC" id="5.4.3.8" evidence="1"/>
<dbReference type="EMBL" id="AM942759">
    <property type="protein sequence ID" value="CAR40595.1"/>
    <property type="molecule type" value="Genomic_DNA"/>
</dbReference>
<dbReference type="RefSeq" id="WP_012367503.1">
    <property type="nucleotide sequence ID" value="NC_010554.1"/>
</dbReference>
<dbReference type="SMR" id="B4EUE1"/>
<dbReference type="EnsemblBacteria" id="CAR40595">
    <property type="protein sequence ID" value="CAR40595"/>
    <property type="gene ID" value="PMI0205"/>
</dbReference>
<dbReference type="GeneID" id="6801596"/>
<dbReference type="KEGG" id="pmr:PMI0205"/>
<dbReference type="eggNOG" id="COG0001">
    <property type="taxonomic scope" value="Bacteria"/>
</dbReference>
<dbReference type="HOGENOM" id="CLU_016922_1_5_6"/>
<dbReference type="UniPathway" id="UPA00251">
    <property type="reaction ID" value="UER00317"/>
</dbReference>
<dbReference type="Proteomes" id="UP000008319">
    <property type="component" value="Chromosome"/>
</dbReference>
<dbReference type="GO" id="GO:0005737">
    <property type="term" value="C:cytoplasm"/>
    <property type="evidence" value="ECO:0007669"/>
    <property type="project" value="UniProtKB-SubCell"/>
</dbReference>
<dbReference type="GO" id="GO:0042286">
    <property type="term" value="F:glutamate-1-semialdehyde 2,1-aminomutase activity"/>
    <property type="evidence" value="ECO:0007669"/>
    <property type="project" value="UniProtKB-UniRule"/>
</dbReference>
<dbReference type="GO" id="GO:0030170">
    <property type="term" value="F:pyridoxal phosphate binding"/>
    <property type="evidence" value="ECO:0007669"/>
    <property type="project" value="InterPro"/>
</dbReference>
<dbReference type="GO" id="GO:0008483">
    <property type="term" value="F:transaminase activity"/>
    <property type="evidence" value="ECO:0007669"/>
    <property type="project" value="InterPro"/>
</dbReference>
<dbReference type="GO" id="GO:0006782">
    <property type="term" value="P:protoporphyrinogen IX biosynthetic process"/>
    <property type="evidence" value="ECO:0007669"/>
    <property type="project" value="UniProtKB-UniRule"/>
</dbReference>
<dbReference type="CDD" id="cd00610">
    <property type="entry name" value="OAT_like"/>
    <property type="match status" value="1"/>
</dbReference>
<dbReference type="FunFam" id="3.40.640.10:FF:000021">
    <property type="entry name" value="Glutamate-1-semialdehyde 2,1-aminomutase"/>
    <property type="match status" value="1"/>
</dbReference>
<dbReference type="FunFam" id="3.90.1150.10:FF:000012">
    <property type="entry name" value="Glutamate-1-semialdehyde 2,1-aminomutase"/>
    <property type="match status" value="1"/>
</dbReference>
<dbReference type="Gene3D" id="3.90.1150.10">
    <property type="entry name" value="Aspartate Aminotransferase, domain 1"/>
    <property type="match status" value="1"/>
</dbReference>
<dbReference type="Gene3D" id="3.40.640.10">
    <property type="entry name" value="Type I PLP-dependent aspartate aminotransferase-like (Major domain)"/>
    <property type="match status" value="1"/>
</dbReference>
<dbReference type="HAMAP" id="MF_00375">
    <property type="entry name" value="HemL_aminotrans_3"/>
    <property type="match status" value="1"/>
</dbReference>
<dbReference type="InterPro" id="IPR004639">
    <property type="entry name" value="4pyrrol_synth_GluAld_NH2Trfase"/>
</dbReference>
<dbReference type="InterPro" id="IPR005814">
    <property type="entry name" value="Aminotrans_3"/>
</dbReference>
<dbReference type="InterPro" id="IPR049704">
    <property type="entry name" value="Aminotrans_3_PPA_site"/>
</dbReference>
<dbReference type="InterPro" id="IPR015424">
    <property type="entry name" value="PyrdxlP-dep_Trfase"/>
</dbReference>
<dbReference type="InterPro" id="IPR015421">
    <property type="entry name" value="PyrdxlP-dep_Trfase_major"/>
</dbReference>
<dbReference type="InterPro" id="IPR015422">
    <property type="entry name" value="PyrdxlP-dep_Trfase_small"/>
</dbReference>
<dbReference type="NCBIfam" id="TIGR00713">
    <property type="entry name" value="hemL"/>
    <property type="match status" value="1"/>
</dbReference>
<dbReference type="NCBIfam" id="NF000818">
    <property type="entry name" value="PRK00062.1"/>
    <property type="match status" value="1"/>
</dbReference>
<dbReference type="PANTHER" id="PTHR43713">
    <property type="entry name" value="GLUTAMATE-1-SEMIALDEHYDE 2,1-AMINOMUTASE"/>
    <property type="match status" value="1"/>
</dbReference>
<dbReference type="PANTHER" id="PTHR43713:SF3">
    <property type="entry name" value="GLUTAMATE-1-SEMIALDEHYDE 2,1-AMINOMUTASE 1, CHLOROPLASTIC-RELATED"/>
    <property type="match status" value="1"/>
</dbReference>
<dbReference type="Pfam" id="PF00202">
    <property type="entry name" value="Aminotran_3"/>
    <property type="match status" value="1"/>
</dbReference>
<dbReference type="SUPFAM" id="SSF53383">
    <property type="entry name" value="PLP-dependent transferases"/>
    <property type="match status" value="1"/>
</dbReference>
<dbReference type="PROSITE" id="PS00600">
    <property type="entry name" value="AA_TRANSFER_CLASS_3"/>
    <property type="match status" value="1"/>
</dbReference>
<reference key="1">
    <citation type="journal article" date="2008" name="J. Bacteriol.">
        <title>Complete genome sequence of uropathogenic Proteus mirabilis, a master of both adherence and motility.</title>
        <authorList>
            <person name="Pearson M.M."/>
            <person name="Sebaihia M."/>
            <person name="Churcher C."/>
            <person name="Quail M.A."/>
            <person name="Seshasayee A.S."/>
            <person name="Luscombe N.M."/>
            <person name="Abdellah Z."/>
            <person name="Arrosmith C."/>
            <person name="Atkin B."/>
            <person name="Chillingworth T."/>
            <person name="Hauser H."/>
            <person name="Jagels K."/>
            <person name="Moule S."/>
            <person name="Mungall K."/>
            <person name="Norbertczak H."/>
            <person name="Rabbinowitsch E."/>
            <person name="Walker D."/>
            <person name="Whithead S."/>
            <person name="Thomson N.R."/>
            <person name="Rather P.N."/>
            <person name="Parkhill J."/>
            <person name="Mobley H.L.T."/>
        </authorList>
    </citation>
    <scope>NUCLEOTIDE SEQUENCE [LARGE SCALE GENOMIC DNA]</scope>
    <source>
        <strain>HI4320</strain>
    </source>
</reference>
<organism>
    <name type="scientific">Proteus mirabilis (strain HI4320)</name>
    <dbReference type="NCBI Taxonomy" id="529507"/>
    <lineage>
        <taxon>Bacteria</taxon>
        <taxon>Pseudomonadati</taxon>
        <taxon>Pseudomonadota</taxon>
        <taxon>Gammaproteobacteria</taxon>
        <taxon>Enterobacterales</taxon>
        <taxon>Morganellaceae</taxon>
        <taxon>Proteus</taxon>
    </lineage>
</organism>
<accession>B4EUE1</accession>